<organism>
    <name type="scientific">Streptococcus pyogenes serotype M28 (strain MGAS6180)</name>
    <dbReference type="NCBI Taxonomy" id="319701"/>
    <lineage>
        <taxon>Bacteria</taxon>
        <taxon>Bacillati</taxon>
        <taxon>Bacillota</taxon>
        <taxon>Bacilli</taxon>
        <taxon>Lactobacillales</taxon>
        <taxon>Streptococcaceae</taxon>
        <taxon>Streptococcus</taxon>
    </lineage>
</organism>
<sequence>MRRELLLEKIETYKAVMPWYVLDYYQSKLAVPYSFTTLYEYLKEYKRFFDWLMDADLTQAPKIADIDLSTLEHLTKKDLEAFVLYLRERPSLNTYSTKEGLSQTTINRTLSALSSLYKYLTEEVENDQGEPYFYRNVMKKVSTKKKKETLASRAENIKQKLFLGDETLAFLDYVDKEYEQKLSNRAKSSFRKNKERDLAIIALLLASGVRLSEAVNLDLKDVNLNMMIIEVIRKGGKRDSVNVAGFAKGYLESYLAVRQRRYKAEKQDLAFFLTEYRGVPNRMDASSIEKMVGKYSEDFKIRVTPHKLRHTLATRLYDATKSQVLVSHQLGHSSTQVTDLYTHIVNDEQKNALDNL</sequence>
<name>XERS_STRPM</name>
<gene>
    <name evidence="1" type="primary">xerS</name>
    <name type="ordered locus">M28_Spy0885</name>
</gene>
<keyword id="KW-0131">Cell cycle</keyword>
<keyword id="KW-0132">Cell division</keyword>
<keyword id="KW-0159">Chromosome partition</keyword>
<keyword id="KW-0963">Cytoplasm</keyword>
<keyword id="KW-0229">DNA integration</keyword>
<keyword id="KW-0233">DNA recombination</keyword>
<keyword id="KW-0238">DNA-binding</keyword>
<feature type="chain" id="PRO_0000372674" description="Tyrosine recombinase XerS">
    <location>
        <begin position="1"/>
        <end position="356"/>
    </location>
</feature>
<feature type="domain" description="Core-binding (CB)" evidence="3">
    <location>
        <begin position="16"/>
        <end position="121"/>
    </location>
</feature>
<feature type="domain" description="Tyr recombinase" evidence="2">
    <location>
        <begin position="169"/>
        <end position="354"/>
    </location>
</feature>
<feature type="active site" evidence="1">
    <location>
        <position position="210"/>
    </location>
</feature>
<feature type="active site" evidence="1">
    <location>
        <position position="234"/>
    </location>
</feature>
<feature type="active site" evidence="1">
    <location>
        <position position="306"/>
    </location>
</feature>
<feature type="active site" evidence="1">
    <location>
        <position position="309"/>
    </location>
</feature>
<feature type="active site" evidence="1">
    <location>
        <position position="332"/>
    </location>
</feature>
<feature type="active site" description="O-(3'-phospho-DNA)-tyrosine intermediate" evidence="1">
    <location>
        <position position="341"/>
    </location>
</feature>
<protein>
    <recommendedName>
        <fullName evidence="1">Tyrosine recombinase XerS</fullName>
    </recommendedName>
</protein>
<accession>Q48TG2</accession>
<dbReference type="EMBL" id="CP000056">
    <property type="protein sequence ID" value="AAX71998.1"/>
    <property type="status" value="ALT_INIT"/>
    <property type="molecule type" value="Genomic_DNA"/>
</dbReference>
<dbReference type="RefSeq" id="WP_023079834.1">
    <property type="nucleotide sequence ID" value="NC_007296.2"/>
</dbReference>
<dbReference type="SMR" id="Q48TG2"/>
<dbReference type="KEGG" id="spb:M28_Spy0885"/>
<dbReference type="HOGENOM" id="CLU_027562_9_6_9"/>
<dbReference type="GO" id="GO:0005737">
    <property type="term" value="C:cytoplasm"/>
    <property type="evidence" value="ECO:0007669"/>
    <property type="project" value="UniProtKB-SubCell"/>
</dbReference>
<dbReference type="GO" id="GO:0003677">
    <property type="term" value="F:DNA binding"/>
    <property type="evidence" value="ECO:0007669"/>
    <property type="project" value="UniProtKB-KW"/>
</dbReference>
<dbReference type="GO" id="GO:0009037">
    <property type="term" value="F:tyrosine-based site-specific recombinase activity"/>
    <property type="evidence" value="ECO:0007669"/>
    <property type="project" value="UniProtKB-UniRule"/>
</dbReference>
<dbReference type="GO" id="GO:0051301">
    <property type="term" value="P:cell division"/>
    <property type="evidence" value="ECO:0007669"/>
    <property type="project" value="UniProtKB-KW"/>
</dbReference>
<dbReference type="GO" id="GO:0007059">
    <property type="term" value="P:chromosome segregation"/>
    <property type="evidence" value="ECO:0007669"/>
    <property type="project" value="UniProtKB-UniRule"/>
</dbReference>
<dbReference type="GO" id="GO:0006310">
    <property type="term" value="P:DNA recombination"/>
    <property type="evidence" value="ECO:0007669"/>
    <property type="project" value="UniProtKB-UniRule"/>
</dbReference>
<dbReference type="CDD" id="cd00397">
    <property type="entry name" value="DNA_BRE_C"/>
    <property type="match status" value="1"/>
</dbReference>
<dbReference type="Gene3D" id="1.10.150.130">
    <property type="match status" value="1"/>
</dbReference>
<dbReference type="Gene3D" id="1.10.443.10">
    <property type="entry name" value="Intergrase catalytic core"/>
    <property type="match status" value="1"/>
</dbReference>
<dbReference type="HAMAP" id="MF_01816">
    <property type="entry name" value="Recomb_XerS"/>
    <property type="match status" value="1"/>
</dbReference>
<dbReference type="InterPro" id="IPR044068">
    <property type="entry name" value="CB"/>
</dbReference>
<dbReference type="InterPro" id="IPR011010">
    <property type="entry name" value="DNA_brk_join_enz"/>
</dbReference>
<dbReference type="InterPro" id="IPR013762">
    <property type="entry name" value="Integrase-like_cat_sf"/>
</dbReference>
<dbReference type="InterPro" id="IPR002104">
    <property type="entry name" value="Integrase_catalytic"/>
</dbReference>
<dbReference type="InterPro" id="IPR010998">
    <property type="entry name" value="Integrase_recombinase_N"/>
</dbReference>
<dbReference type="InterPro" id="IPR004107">
    <property type="entry name" value="Integrase_SAM-like_N"/>
</dbReference>
<dbReference type="InterPro" id="IPR023670">
    <property type="entry name" value="Recomb_XerS"/>
</dbReference>
<dbReference type="InterPro" id="IPR050090">
    <property type="entry name" value="Tyrosine_recombinase_XerCD"/>
</dbReference>
<dbReference type="NCBIfam" id="NF003462">
    <property type="entry name" value="PRK05084.1"/>
    <property type="match status" value="1"/>
</dbReference>
<dbReference type="PANTHER" id="PTHR30349">
    <property type="entry name" value="PHAGE INTEGRASE-RELATED"/>
    <property type="match status" value="1"/>
</dbReference>
<dbReference type="PANTHER" id="PTHR30349:SF77">
    <property type="entry name" value="TYROSINE RECOMBINASE XERC"/>
    <property type="match status" value="1"/>
</dbReference>
<dbReference type="Pfam" id="PF02899">
    <property type="entry name" value="Phage_int_SAM_1"/>
    <property type="match status" value="1"/>
</dbReference>
<dbReference type="Pfam" id="PF00589">
    <property type="entry name" value="Phage_integrase"/>
    <property type="match status" value="1"/>
</dbReference>
<dbReference type="SUPFAM" id="SSF56349">
    <property type="entry name" value="DNA breaking-rejoining enzymes"/>
    <property type="match status" value="1"/>
</dbReference>
<dbReference type="PROSITE" id="PS51900">
    <property type="entry name" value="CB"/>
    <property type="match status" value="1"/>
</dbReference>
<dbReference type="PROSITE" id="PS51898">
    <property type="entry name" value="TYR_RECOMBINASE"/>
    <property type="match status" value="1"/>
</dbReference>
<evidence type="ECO:0000255" key="1">
    <source>
        <dbReference type="HAMAP-Rule" id="MF_01816"/>
    </source>
</evidence>
<evidence type="ECO:0000255" key="2">
    <source>
        <dbReference type="PROSITE-ProRule" id="PRU01246"/>
    </source>
</evidence>
<evidence type="ECO:0000255" key="3">
    <source>
        <dbReference type="PROSITE-ProRule" id="PRU01248"/>
    </source>
</evidence>
<evidence type="ECO:0000305" key="4"/>
<proteinExistence type="inferred from homology"/>
<reference key="1">
    <citation type="journal article" date="2005" name="J. Infect. Dis.">
        <title>Genome sequence of a serotype M28 strain of group A Streptococcus: potential new insights into puerperal sepsis and bacterial disease specificity.</title>
        <authorList>
            <person name="Green N.M."/>
            <person name="Zhang S."/>
            <person name="Porcella S.F."/>
            <person name="Nagiec M.J."/>
            <person name="Barbian K.D."/>
            <person name="Beres S.B."/>
            <person name="Lefebvre R.B."/>
            <person name="Musser J.M."/>
        </authorList>
    </citation>
    <scope>NUCLEOTIDE SEQUENCE [LARGE SCALE GENOMIC DNA]</scope>
    <source>
        <strain>MGAS6180</strain>
    </source>
</reference>
<comment type="function">
    <text evidence="1">Site-specific tyrosine recombinase, which acts by catalyzing the cutting and rejoining of the recombining DNA molecules. Essential to convert dimers of the bacterial chromosome into monomers to permit their segregation at cell division.</text>
</comment>
<comment type="activity regulation">
    <text evidence="1">FtsK is required for recombination.</text>
</comment>
<comment type="subcellular location">
    <subcellularLocation>
        <location evidence="1">Cytoplasm</location>
    </subcellularLocation>
</comment>
<comment type="similarity">
    <text evidence="1">Belongs to the 'phage' integrase family. XerS subfamily.</text>
</comment>
<comment type="sequence caution" evidence="4">
    <conflict type="erroneous initiation">
        <sequence resource="EMBL-CDS" id="AAX71998"/>
    </conflict>
</comment>